<name>FMT_ACICJ</name>
<evidence type="ECO:0000255" key="1">
    <source>
        <dbReference type="HAMAP-Rule" id="MF_00182"/>
    </source>
</evidence>
<proteinExistence type="inferred from homology"/>
<keyword id="KW-0648">Protein biosynthesis</keyword>
<keyword id="KW-1185">Reference proteome</keyword>
<keyword id="KW-0808">Transferase</keyword>
<protein>
    <recommendedName>
        <fullName evidence="1">Methionyl-tRNA formyltransferase</fullName>
        <ecNumber evidence="1">2.1.2.9</ecNumber>
    </recommendedName>
</protein>
<reference key="1">
    <citation type="submission" date="2007-05" db="EMBL/GenBank/DDBJ databases">
        <title>Complete sequence of chromosome of Acidiphilium cryptum JF-5.</title>
        <authorList>
            <consortium name="US DOE Joint Genome Institute"/>
            <person name="Copeland A."/>
            <person name="Lucas S."/>
            <person name="Lapidus A."/>
            <person name="Barry K."/>
            <person name="Detter J.C."/>
            <person name="Glavina del Rio T."/>
            <person name="Hammon N."/>
            <person name="Israni S."/>
            <person name="Dalin E."/>
            <person name="Tice H."/>
            <person name="Pitluck S."/>
            <person name="Sims D."/>
            <person name="Brettin T."/>
            <person name="Bruce D."/>
            <person name="Han C."/>
            <person name="Schmutz J."/>
            <person name="Larimer F."/>
            <person name="Land M."/>
            <person name="Hauser L."/>
            <person name="Kyrpides N."/>
            <person name="Kim E."/>
            <person name="Magnuson T."/>
            <person name="Richardson P."/>
        </authorList>
    </citation>
    <scope>NUCLEOTIDE SEQUENCE [LARGE SCALE GENOMIC DNA]</scope>
    <source>
        <strain>JF-5</strain>
    </source>
</reference>
<feature type="chain" id="PRO_1000020009" description="Methionyl-tRNA formyltransferase">
    <location>
        <begin position="1"/>
        <end position="301"/>
    </location>
</feature>
<feature type="binding site" evidence="1">
    <location>
        <begin position="110"/>
        <end position="113"/>
    </location>
    <ligand>
        <name>(6S)-5,6,7,8-tetrahydrofolate</name>
        <dbReference type="ChEBI" id="CHEBI:57453"/>
    </ligand>
</feature>
<gene>
    <name evidence="1" type="primary">fmt</name>
    <name type="ordered locus">Acry_0410</name>
</gene>
<accession>A5FVK3</accession>
<comment type="function">
    <text evidence="1">Attaches a formyl group to the free amino group of methionyl-tRNA(fMet). The formyl group appears to play a dual role in the initiator identity of N-formylmethionyl-tRNA by promoting its recognition by IF2 and preventing the misappropriation of this tRNA by the elongation apparatus.</text>
</comment>
<comment type="catalytic activity">
    <reaction evidence="1">
        <text>L-methionyl-tRNA(fMet) + (6R)-10-formyltetrahydrofolate = N-formyl-L-methionyl-tRNA(fMet) + (6S)-5,6,7,8-tetrahydrofolate + H(+)</text>
        <dbReference type="Rhea" id="RHEA:24380"/>
        <dbReference type="Rhea" id="RHEA-COMP:9952"/>
        <dbReference type="Rhea" id="RHEA-COMP:9953"/>
        <dbReference type="ChEBI" id="CHEBI:15378"/>
        <dbReference type="ChEBI" id="CHEBI:57453"/>
        <dbReference type="ChEBI" id="CHEBI:78530"/>
        <dbReference type="ChEBI" id="CHEBI:78844"/>
        <dbReference type="ChEBI" id="CHEBI:195366"/>
        <dbReference type="EC" id="2.1.2.9"/>
    </reaction>
</comment>
<comment type="similarity">
    <text evidence="1">Belongs to the Fmt family.</text>
</comment>
<dbReference type="EC" id="2.1.2.9" evidence="1"/>
<dbReference type="EMBL" id="CP000697">
    <property type="protein sequence ID" value="ABQ29635.1"/>
    <property type="molecule type" value="Genomic_DNA"/>
</dbReference>
<dbReference type="RefSeq" id="WP_011941507.1">
    <property type="nucleotide sequence ID" value="NC_009484.1"/>
</dbReference>
<dbReference type="SMR" id="A5FVK3"/>
<dbReference type="STRING" id="349163.Acry_0410"/>
<dbReference type="KEGG" id="acr:Acry_0410"/>
<dbReference type="eggNOG" id="COG0223">
    <property type="taxonomic scope" value="Bacteria"/>
</dbReference>
<dbReference type="HOGENOM" id="CLU_033347_1_2_5"/>
<dbReference type="Proteomes" id="UP000000245">
    <property type="component" value="Chromosome"/>
</dbReference>
<dbReference type="GO" id="GO:0005829">
    <property type="term" value="C:cytosol"/>
    <property type="evidence" value="ECO:0007669"/>
    <property type="project" value="TreeGrafter"/>
</dbReference>
<dbReference type="GO" id="GO:0004479">
    <property type="term" value="F:methionyl-tRNA formyltransferase activity"/>
    <property type="evidence" value="ECO:0007669"/>
    <property type="project" value="UniProtKB-UniRule"/>
</dbReference>
<dbReference type="CDD" id="cd08646">
    <property type="entry name" value="FMT_core_Met-tRNA-FMT_N"/>
    <property type="match status" value="1"/>
</dbReference>
<dbReference type="CDD" id="cd08704">
    <property type="entry name" value="Met_tRNA_FMT_C"/>
    <property type="match status" value="1"/>
</dbReference>
<dbReference type="Gene3D" id="3.40.50.12230">
    <property type="match status" value="1"/>
</dbReference>
<dbReference type="HAMAP" id="MF_00182">
    <property type="entry name" value="Formyl_trans"/>
    <property type="match status" value="1"/>
</dbReference>
<dbReference type="InterPro" id="IPR005794">
    <property type="entry name" value="Fmt"/>
</dbReference>
<dbReference type="InterPro" id="IPR005793">
    <property type="entry name" value="Formyl_trans_C"/>
</dbReference>
<dbReference type="InterPro" id="IPR002376">
    <property type="entry name" value="Formyl_transf_N"/>
</dbReference>
<dbReference type="InterPro" id="IPR036477">
    <property type="entry name" value="Formyl_transf_N_sf"/>
</dbReference>
<dbReference type="InterPro" id="IPR011034">
    <property type="entry name" value="Formyl_transferase-like_C_sf"/>
</dbReference>
<dbReference type="InterPro" id="IPR001555">
    <property type="entry name" value="GART_AS"/>
</dbReference>
<dbReference type="InterPro" id="IPR044135">
    <property type="entry name" value="Met-tRNA-FMT_C"/>
</dbReference>
<dbReference type="InterPro" id="IPR041711">
    <property type="entry name" value="Met-tRNA-FMT_N"/>
</dbReference>
<dbReference type="NCBIfam" id="TIGR00460">
    <property type="entry name" value="fmt"/>
    <property type="match status" value="1"/>
</dbReference>
<dbReference type="PANTHER" id="PTHR11138">
    <property type="entry name" value="METHIONYL-TRNA FORMYLTRANSFERASE"/>
    <property type="match status" value="1"/>
</dbReference>
<dbReference type="PANTHER" id="PTHR11138:SF5">
    <property type="entry name" value="METHIONYL-TRNA FORMYLTRANSFERASE, MITOCHONDRIAL"/>
    <property type="match status" value="1"/>
</dbReference>
<dbReference type="Pfam" id="PF02911">
    <property type="entry name" value="Formyl_trans_C"/>
    <property type="match status" value="1"/>
</dbReference>
<dbReference type="Pfam" id="PF00551">
    <property type="entry name" value="Formyl_trans_N"/>
    <property type="match status" value="1"/>
</dbReference>
<dbReference type="SUPFAM" id="SSF50486">
    <property type="entry name" value="FMT C-terminal domain-like"/>
    <property type="match status" value="1"/>
</dbReference>
<dbReference type="SUPFAM" id="SSF53328">
    <property type="entry name" value="Formyltransferase"/>
    <property type="match status" value="1"/>
</dbReference>
<dbReference type="PROSITE" id="PS00373">
    <property type="entry name" value="GART"/>
    <property type="match status" value="1"/>
</dbReference>
<organism>
    <name type="scientific">Acidiphilium cryptum (strain JF-5)</name>
    <dbReference type="NCBI Taxonomy" id="349163"/>
    <lineage>
        <taxon>Bacteria</taxon>
        <taxon>Pseudomonadati</taxon>
        <taxon>Pseudomonadota</taxon>
        <taxon>Alphaproteobacteria</taxon>
        <taxon>Acetobacterales</taxon>
        <taxon>Acidocellaceae</taxon>
        <taxon>Acidiphilium</taxon>
    </lineage>
</organism>
<sequence>MRLAFMGSPGFAVPALRALHAAGHDIVAVYCQPPRPVGRGHRIHKCPVHEAAEALGLTVRTPERLRRDDAERAYFRALDLDAAVVAAYGQILPADMLVAPRRGCINIHASLLPRWRGAAPIHAAILAGDAQTGVTIMQMDEGLDTGATLLAEAVPIGPEDTMVDLLDRLADLGAALVIKVLDGNFPPVPQPEGGVTYAPKLSKADAEIDWSASAAVILRRIRAFRPWPGTETRLDGEALKIIRAEPAAGQGEPGTVLDDRLAIACGDAAIRPTLVQRAGRAAMQAEAFLRGHPVAIGTRLG</sequence>